<dbReference type="EMBL" id="AK003177">
    <property type="protein sequence ID" value="BAB22621.1"/>
    <property type="molecule type" value="mRNA"/>
</dbReference>
<dbReference type="EMBL" id="AK146252">
    <property type="protein sequence ID" value="BAE27014.1"/>
    <property type="molecule type" value="mRNA"/>
</dbReference>
<dbReference type="EMBL" id="CH466532">
    <property type="protein sequence ID" value="EDL12210.1"/>
    <property type="molecule type" value="Genomic_DNA"/>
</dbReference>
<dbReference type="EMBL" id="CH466532">
    <property type="protein sequence ID" value="EDL12212.1"/>
    <property type="molecule type" value="Genomic_DNA"/>
</dbReference>
<dbReference type="EMBL" id="BC028517">
    <property type="protein sequence ID" value="AAH28517.1"/>
    <property type="molecule type" value="mRNA"/>
</dbReference>
<dbReference type="EMBL" id="BC058118">
    <property type="protein sequence ID" value="AAH58118.1"/>
    <property type="molecule type" value="mRNA"/>
</dbReference>
<dbReference type="EMBL" id="BC100360">
    <property type="protein sequence ID" value="AAI00361.1"/>
    <property type="molecule type" value="mRNA"/>
</dbReference>
<dbReference type="CCDS" id="CCDS17841.1"/>
<dbReference type="RefSeq" id="NP_001005859.1">
    <property type="nucleotide sequence ID" value="NM_001005859.4"/>
</dbReference>
<dbReference type="RefSeq" id="NP_001274510.1">
    <property type="nucleotide sequence ID" value="NM_001287581.2"/>
</dbReference>
<dbReference type="RefSeq" id="NP_001416022.1">
    <property type="nucleotide sequence ID" value="NM_001429093.1"/>
</dbReference>
<dbReference type="RefSeq" id="NP_001416023.1">
    <property type="nucleotide sequence ID" value="NM_001429094.1"/>
</dbReference>
<dbReference type="RefSeq" id="NP_001416024.1">
    <property type="nucleotide sequence ID" value="NM_001429095.1"/>
</dbReference>
<dbReference type="RefSeq" id="NP_001416025.1">
    <property type="nucleotide sequence ID" value="NM_001429096.1"/>
</dbReference>
<dbReference type="RefSeq" id="NP_081000.1">
    <property type="nucleotide sequence ID" value="NM_026724.3"/>
</dbReference>
<dbReference type="RefSeq" id="XP_001481222.1">
    <property type="nucleotide sequence ID" value="XM_001481172.6"/>
</dbReference>
<dbReference type="RefSeq" id="XP_036019156.1">
    <property type="nucleotide sequence ID" value="XM_036163263.1"/>
</dbReference>
<dbReference type="PDB" id="6SWA">
    <property type="method" value="EM"/>
    <property type="resolution" value="3.10 A"/>
    <property type="chains" value="e=1-117"/>
</dbReference>
<dbReference type="PDB" id="7CPU">
    <property type="method" value="EM"/>
    <property type="resolution" value="2.82 A"/>
    <property type="chains" value="Lg=1-117"/>
</dbReference>
<dbReference type="PDB" id="7CPV">
    <property type="method" value="EM"/>
    <property type="resolution" value="3.03 A"/>
    <property type="chains" value="Lg=1-117"/>
</dbReference>
<dbReference type="PDB" id="7LS1">
    <property type="method" value="EM"/>
    <property type="resolution" value="3.30 A"/>
    <property type="chains" value="a2=1-117"/>
</dbReference>
<dbReference type="PDB" id="7LS2">
    <property type="method" value="EM"/>
    <property type="resolution" value="3.10 A"/>
    <property type="chains" value="a2=1-117"/>
</dbReference>
<dbReference type="PDBsum" id="6SWA"/>
<dbReference type="PDBsum" id="7CPU"/>
<dbReference type="PDBsum" id="7CPV"/>
<dbReference type="PDBsum" id="7LS1"/>
<dbReference type="PDBsum" id="7LS2"/>
<dbReference type="EMDB" id="EMD-10321"/>
<dbReference type="EMDB" id="EMD-23500"/>
<dbReference type="EMDB" id="EMD-23501"/>
<dbReference type="EMDB" id="EMD-30432"/>
<dbReference type="EMDB" id="EMD-30433"/>
<dbReference type="SMR" id="Q9D1R9"/>
<dbReference type="BioGRID" id="212853">
    <property type="interactions" value="14"/>
</dbReference>
<dbReference type="BioGRID" id="546909">
    <property type="interactions" value="6"/>
</dbReference>
<dbReference type="BioGRID" id="787025">
    <property type="interactions" value="2"/>
</dbReference>
<dbReference type="ComplexPortal" id="CPX-5262">
    <property type="entry name" value="60S cytosolic large ribosomal subunit"/>
</dbReference>
<dbReference type="ComplexPortal" id="CPX-7662">
    <property type="entry name" value="60S cytosolic large ribosomal subunit, testis-specific variant"/>
</dbReference>
<dbReference type="ComplexPortal" id="CPX-7663">
    <property type="entry name" value="60S cytosolic large ribosomal subunit, striated muscle variant"/>
</dbReference>
<dbReference type="FunCoup" id="Q9D1R9">
    <property type="interactions" value="2343"/>
</dbReference>
<dbReference type="IntAct" id="Q9D1R9">
    <property type="interactions" value="6"/>
</dbReference>
<dbReference type="MINT" id="Q9D1R9"/>
<dbReference type="STRING" id="10090.ENSMUSP00000086614"/>
<dbReference type="GlyGen" id="Q9D1R9">
    <property type="glycosylation" value="1 site, 1 O-linked glycan (1 site)"/>
</dbReference>
<dbReference type="iPTMnet" id="Q9D1R9"/>
<dbReference type="MetOSite" id="Q9D1R9"/>
<dbReference type="PhosphoSitePlus" id="Q9D1R9"/>
<dbReference type="SwissPalm" id="Q9D1R9"/>
<dbReference type="jPOST" id="Q9D1R9"/>
<dbReference type="PaxDb" id="10090-ENSMUSP00000086614"/>
<dbReference type="PeptideAtlas" id="Q9D1R9"/>
<dbReference type="ProteomicsDB" id="299821"/>
<dbReference type="Pumba" id="Q9D1R9"/>
<dbReference type="TopDownProteomics" id="Q9D1R9"/>
<dbReference type="Antibodypedia" id="26278">
    <property type="antibodies" value="154 antibodies from 23 providers"/>
</dbReference>
<dbReference type="DNASU" id="68436"/>
<dbReference type="Ensembl" id="ENSMUST00000062601.14">
    <property type="protein sequence ID" value="ENSMUSP00000086614.5"/>
    <property type="gene ID" value="ENSMUSG00000062006.13"/>
</dbReference>
<dbReference type="Ensembl" id="ENSMUST00000079085.11">
    <property type="protein sequence ID" value="ENSMUSP00000078092.7"/>
    <property type="gene ID" value="ENSMUSG00000062006.13"/>
</dbReference>
<dbReference type="Ensembl" id="ENSMUST00000196202.5">
    <property type="protein sequence ID" value="ENSMUSP00000142486.2"/>
    <property type="gene ID" value="ENSMUSG00000062006.13"/>
</dbReference>
<dbReference type="GeneID" id="68436"/>
<dbReference type="KEGG" id="mmu:619547"/>
<dbReference type="KEGG" id="mmu:68436"/>
<dbReference type="UCSC" id="uc008rjd.2">
    <property type="organism name" value="mouse"/>
</dbReference>
<dbReference type="AGR" id="MGI:1915686"/>
<dbReference type="CTD" id="6164"/>
<dbReference type="CTD" id="619547"/>
<dbReference type="MGI" id="MGI:1915686">
    <property type="gene designation" value="Rpl34"/>
</dbReference>
<dbReference type="VEuPathDB" id="HostDB:ENSMUSG00000062006"/>
<dbReference type="eggNOG" id="KOG1790">
    <property type="taxonomic scope" value="Eukaryota"/>
</dbReference>
<dbReference type="GeneTree" id="ENSGT00390000008294"/>
<dbReference type="HOGENOM" id="CLU_118652_0_1_1"/>
<dbReference type="InParanoid" id="Q9D1R9"/>
<dbReference type="OMA" id="RCHKCVR"/>
<dbReference type="OrthoDB" id="277449at2759"/>
<dbReference type="PhylomeDB" id="Q9D1R9"/>
<dbReference type="TreeFam" id="TF314326"/>
<dbReference type="Reactome" id="R-MMU-156827">
    <property type="pathway name" value="L13a-mediated translational silencing of Ceruloplasmin expression"/>
</dbReference>
<dbReference type="Reactome" id="R-MMU-1799339">
    <property type="pathway name" value="SRP-dependent cotranslational protein targeting to membrane"/>
</dbReference>
<dbReference type="Reactome" id="R-MMU-6791226">
    <property type="pathway name" value="Major pathway of rRNA processing in the nucleolus and cytosol"/>
</dbReference>
<dbReference type="Reactome" id="R-MMU-72689">
    <property type="pathway name" value="Formation of a pool of free 40S subunits"/>
</dbReference>
<dbReference type="Reactome" id="R-MMU-72706">
    <property type="pathway name" value="GTP hydrolysis and joining of the 60S ribosomal subunit"/>
</dbReference>
<dbReference type="Reactome" id="R-MMU-975956">
    <property type="pathway name" value="Nonsense Mediated Decay (NMD) independent of the Exon Junction Complex (EJC)"/>
</dbReference>
<dbReference type="Reactome" id="R-MMU-975957">
    <property type="pathway name" value="Nonsense Mediated Decay (NMD) enhanced by the Exon Junction Complex (EJC)"/>
</dbReference>
<dbReference type="BioGRID-ORCS" id="619547">
    <property type="hits" value="9 hits in 21 CRISPR screens"/>
</dbReference>
<dbReference type="BioGRID-ORCS" id="68436">
    <property type="hits" value="24 hits in 55 CRISPR screens"/>
</dbReference>
<dbReference type="CD-CODE" id="CE726F99">
    <property type="entry name" value="Postsynaptic density"/>
</dbReference>
<dbReference type="ChiTaRS" id="Rpl34">
    <property type="organism name" value="mouse"/>
</dbReference>
<dbReference type="PRO" id="PR:Q9D1R9"/>
<dbReference type="Proteomes" id="UP000000589">
    <property type="component" value="Chromosome 3"/>
</dbReference>
<dbReference type="RNAct" id="Q9D1R9">
    <property type="molecule type" value="protein"/>
</dbReference>
<dbReference type="Bgee" id="ENSMUSG00000062006">
    <property type="expression patterns" value="Expressed in yolk sac and 65 other cell types or tissues"/>
</dbReference>
<dbReference type="ExpressionAtlas" id="Q9D1R9">
    <property type="expression patterns" value="baseline and differential"/>
</dbReference>
<dbReference type="GO" id="GO:0005737">
    <property type="term" value="C:cytoplasm"/>
    <property type="evidence" value="ECO:0000314"/>
    <property type="project" value="ComplexPortal"/>
</dbReference>
<dbReference type="GO" id="GO:0005829">
    <property type="term" value="C:cytosol"/>
    <property type="evidence" value="ECO:0000304"/>
    <property type="project" value="Reactome"/>
</dbReference>
<dbReference type="GO" id="GO:0022625">
    <property type="term" value="C:cytosolic large ribosomal subunit"/>
    <property type="evidence" value="ECO:0000314"/>
    <property type="project" value="UniProtKB"/>
</dbReference>
<dbReference type="GO" id="GO:0005783">
    <property type="term" value="C:endoplasmic reticulum"/>
    <property type="evidence" value="ECO:0007669"/>
    <property type="project" value="UniProtKB-SubCell"/>
</dbReference>
<dbReference type="GO" id="GO:0005739">
    <property type="term" value="C:mitochondrion"/>
    <property type="evidence" value="ECO:0007005"/>
    <property type="project" value="MGI"/>
</dbReference>
<dbReference type="GO" id="GO:0005730">
    <property type="term" value="C:nucleolus"/>
    <property type="evidence" value="ECO:0007669"/>
    <property type="project" value="Ensembl"/>
</dbReference>
<dbReference type="GO" id="GO:0098794">
    <property type="term" value="C:postsynapse"/>
    <property type="evidence" value="ECO:0000303"/>
    <property type="project" value="SynGO"/>
</dbReference>
<dbReference type="GO" id="GO:0098793">
    <property type="term" value="C:presynapse"/>
    <property type="evidence" value="ECO:0000303"/>
    <property type="project" value="SynGO"/>
</dbReference>
<dbReference type="GO" id="GO:0005840">
    <property type="term" value="C:ribosome"/>
    <property type="evidence" value="ECO:0000303"/>
    <property type="project" value="SynGO"/>
</dbReference>
<dbReference type="GO" id="GO:0045202">
    <property type="term" value="C:synapse"/>
    <property type="evidence" value="ECO:0000314"/>
    <property type="project" value="SynGO"/>
</dbReference>
<dbReference type="GO" id="GO:0003735">
    <property type="term" value="F:structural constituent of ribosome"/>
    <property type="evidence" value="ECO:0000314"/>
    <property type="project" value="UniProtKB"/>
</dbReference>
<dbReference type="GO" id="GO:0002181">
    <property type="term" value="P:cytoplasmic translation"/>
    <property type="evidence" value="ECO:0000303"/>
    <property type="project" value="ComplexPortal"/>
</dbReference>
<dbReference type="GO" id="GO:0140242">
    <property type="term" value="P:translation at postsynapse"/>
    <property type="evidence" value="ECO:0000303"/>
    <property type="project" value="SynGO"/>
</dbReference>
<dbReference type="GO" id="GO:0140236">
    <property type="term" value="P:translation at presynapse"/>
    <property type="evidence" value="ECO:0000303"/>
    <property type="project" value="SynGO"/>
</dbReference>
<dbReference type="Gene3D" id="6.20.340.10">
    <property type="match status" value="1"/>
</dbReference>
<dbReference type="Gene3D" id="6.20.370.70">
    <property type="match status" value="1"/>
</dbReference>
<dbReference type="InterPro" id="IPR008195">
    <property type="entry name" value="Ribosomal_eL34"/>
</dbReference>
<dbReference type="InterPro" id="IPR038562">
    <property type="entry name" value="Ribosomal_eL34_C_sf"/>
</dbReference>
<dbReference type="InterPro" id="IPR018065">
    <property type="entry name" value="Ribosomal_eL34_CS"/>
</dbReference>
<dbReference type="PANTHER" id="PTHR46595">
    <property type="entry name" value="60S RIBOSOMAL PROTEIN L34"/>
    <property type="match status" value="1"/>
</dbReference>
<dbReference type="Pfam" id="PF01199">
    <property type="entry name" value="Ribosomal_L34e"/>
    <property type="match status" value="1"/>
</dbReference>
<dbReference type="PRINTS" id="PR01250">
    <property type="entry name" value="RIBOSOMALL34"/>
</dbReference>
<dbReference type="PROSITE" id="PS01145">
    <property type="entry name" value="RIBOSOMAL_L34E"/>
    <property type="match status" value="1"/>
</dbReference>
<evidence type="ECO:0000250" key="1">
    <source>
        <dbReference type="UniProtKB" id="P49207"/>
    </source>
</evidence>
<evidence type="ECO:0000250" key="2">
    <source>
        <dbReference type="UniProtKB" id="Q29223"/>
    </source>
</evidence>
<evidence type="ECO:0000269" key="3">
    <source>
    </source>
</evidence>
<evidence type="ECO:0000305" key="4"/>
<evidence type="ECO:0007744" key="5">
    <source>
        <dbReference type="PDB" id="7CPU"/>
    </source>
</evidence>
<evidence type="ECO:0007744" key="6">
    <source>
        <dbReference type="PDB" id="7CPV"/>
    </source>
</evidence>
<evidence type="ECO:0007744" key="7">
    <source>
    </source>
</evidence>
<feature type="chain" id="PRO_0000131832" description="Large ribosomal subunit protein eL34">
    <location>
        <begin position="1"/>
        <end position="117"/>
    </location>
</feature>
<feature type="modified residue" description="Phosphoserine" evidence="1">
    <location>
        <position position="12"/>
    </location>
</feature>
<feature type="modified residue" description="N6-acetyllysine" evidence="1">
    <location>
        <position position="36"/>
    </location>
</feature>
<feature type="modified residue" description="N6-acetyllysine" evidence="7">
    <location>
        <position position="43"/>
    </location>
</feature>
<feature type="cross-link" description="Glycyl lysine isopeptide (Lys-Gly) (interchain with G-Cter in SUMO2)" evidence="1">
    <location>
        <position position="108"/>
    </location>
</feature>
<keyword id="KW-0002">3D-structure</keyword>
<keyword id="KW-0007">Acetylation</keyword>
<keyword id="KW-0963">Cytoplasm</keyword>
<keyword id="KW-0256">Endoplasmic reticulum</keyword>
<keyword id="KW-1017">Isopeptide bond</keyword>
<keyword id="KW-0597">Phosphoprotein</keyword>
<keyword id="KW-1185">Reference proteome</keyword>
<keyword id="KW-0687">Ribonucleoprotein</keyword>
<keyword id="KW-0689">Ribosomal protein</keyword>
<keyword id="KW-0832">Ubl conjugation</keyword>
<protein>
    <recommendedName>
        <fullName evidence="4">Large ribosomal subunit protein eL34</fullName>
    </recommendedName>
    <alternativeName>
        <fullName>60S ribosomal protein L34</fullName>
    </alternativeName>
</protein>
<organism>
    <name type="scientific">Mus musculus</name>
    <name type="common">Mouse</name>
    <dbReference type="NCBI Taxonomy" id="10090"/>
    <lineage>
        <taxon>Eukaryota</taxon>
        <taxon>Metazoa</taxon>
        <taxon>Chordata</taxon>
        <taxon>Craniata</taxon>
        <taxon>Vertebrata</taxon>
        <taxon>Euteleostomi</taxon>
        <taxon>Mammalia</taxon>
        <taxon>Eutheria</taxon>
        <taxon>Euarchontoglires</taxon>
        <taxon>Glires</taxon>
        <taxon>Rodentia</taxon>
        <taxon>Myomorpha</taxon>
        <taxon>Muroidea</taxon>
        <taxon>Muridae</taxon>
        <taxon>Murinae</taxon>
        <taxon>Mus</taxon>
        <taxon>Mus</taxon>
    </lineage>
</organism>
<reference key="1">
    <citation type="journal article" date="2005" name="Science">
        <title>The transcriptional landscape of the mammalian genome.</title>
        <authorList>
            <person name="Carninci P."/>
            <person name="Kasukawa T."/>
            <person name="Katayama S."/>
            <person name="Gough J."/>
            <person name="Frith M.C."/>
            <person name="Maeda N."/>
            <person name="Oyama R."/>
            <person name="Ravasi T."/>
            <person name="Lenhard B."/>
            <person name="Wells C."/>
            <person name="Kodzius R."/>
            <person name="Shimokawa K."/>
            <person name="Bajic V.B."/>
            <person name="Brenner S.E."/>
            <person name="Batalov S."/>
            <person name="Forrest A.R."/>
            <person name="Zavolan M."/>
            <person name="Davis M.J."/>
            <person name="Wilming L.G."/>
            <person name="Aidinis V."/>
            <person name="Allen J.E."/>
            <person name="Ambesi-Impiombato A."/>
            <person name="Apweiler R."/>
            <person name="Aturaliya R.N."/>
            <person name="Bailey T.L."/>
            <person name="Bansal M."/>
            <person name="Baxter L."/>
            <person name="Beisel K.W."/>
            <person name="Bersano T."/>
            <person name="Bono H."/>
            <person name="Chalk A.M."/>
            <person name="Chiu K.P."/>
            <person name="Choudhary V."/>
            <person name="Christoffels A."/>
            <person name="Clutterbuck D.R."/>
            <person name="Crowe M.L."/>
            <person name="Dalla E."/>
            <person name="Dalrymple B.P."/>
            <person name="de Bono B."/>
            <person name="Della Gatta G."/>
            <person name="di Bernardo D."/>
            <person name="Down T."/>
            <person name="Engstrom P."/>
            <person name="Fagiolini M."/>
            <person name="Faulkner G."/>
            <person name="Fletcher C.F."/>
            <person name="Fukushima T."/>
            <person name="Furuno M."/>
            <person name="Futaki S."/>
            <person name="Gariboldi M."/>
            <person name="Georgii-Hemming P."/>
            <person name="Gingeras T.R."/>
            <person name="Gojobori T."/>
            <person name="Green R.E."/>
            <person name="Gustincich S."/>
            <person name="Harbers M."/>
            <person name="Hayashi Y."/>
            <person name="Hensch T.K."/>
            <person name="Hirokawa N."/>
            <person name="Hill D."/>
            <person name="Huminiecki L."/>
            <person name="Iacono M."/>
            <person name="Ikeo K."/>
            <person name="Iwama A."/>
            <person name="Ishikawa T."/>
            <person name="Jakt M."/>
            <person name="Kanapin A."/>
            <person name="Katoh M."/>
            <person name="Kawasawa Y."/>
            <person name="Kelso J."/>
            <person name="Kitamura H."/>
            <person name="Kitano H."/>
            <person name="Kollias G."/>
            <person name="Krishnan S.P."/>
            <person name="Kruger A."/>
            <person name="Kummerfeld S.K."/>
            <person name="Kurochkin I.V."/>
            <person name="Lareau L.F."/>
            <person name="Lazarevic D."/>
            <person name="Lipovich L."/>
            <person name="Liu J."/>
            <person name="Liuni S."/>
            <person name="McWilliam S."/>
            <person name="Madan Babu M."/>
            <person name="Madera M."/>
            <person name="Marchionni L."/>
            <person name="Matsuda H."/>
            <person name="Matsuzawa S."/>
            <person name="Miki H."/>
            <person name="Mignone F."/>
            <person name="Miyake S."/>
            <person name="Morris K."/>
            <person name="Mottagui-Tabar S."/>
            <person name="Mulder N."/>
            <person name="Nakano N."/>
            <person name="Nakauchi H."/>
            <person name="Ng P."/>
            <person name="Nilsson R."/>
            <person name="Nishiguchi S."/>
            <person name="Nishikawa S."/>
            <person name="Nori F."/>
            <person name="Ohara O."/>
            <person name="Okazaki Y."/>
            <person name="Orlando V."/>
            <person name="Pang K.C."/>
            <person name="Pavan W.J."/>
            <person name="Pavesi G."/>
            <person name="Pesole G."/>
            <person name="Petrovsky N."/>
            <person name="Piazza S."/>
            <person name="Reed J."/>
            <person name="Reid J.F."/>
            <person name="Ring B.Z."/>
            <person name="Ringwald M."/>
            <person name="Rost B."/>
            <person name="Ruan Y."/>
            <person name="Salzberg S.L."/>
            <person name="Sandelin A."/>
            <person name="Schneider C."/>
            <person name="Schoenbach C."/>
            <person name="Sekiguchi K."/>
            <person name="Semple C.A."/>
            <person name="Seno S."/>
            <person name="Sessa L."/>
            <person name="Sheng Y."/>
            <person name="Shibata Y."/>
            <person name="Shimada H."/>
            <person name="Shimada K."/>
            <person name="Silva D."/>
            <person name="Sinclair B."/>
            <person name="Sperling S."/>
            <person name="Stupka E."/>
            <person name="Sugiura K."/>
            <person name="Sultana R."/>
            <person name="Takenaka Y."/>
            <person name="Taki K."/>
            <person name="Tammoja K."/>
            <person name="Tan S.L."/>
            <person name="Tang S."/>
            <person name="Taylor M.S."/>
            <person name="Tegner J."/>
            <person name="Teichmann S.A."/>
            <person name="Ueda H.R."/>
            <person name="van Nimwegen E."/>
            <person name="Verardo R."/>
            <person name="Wei C.L."/>
            <person name="Yagi K."/>
            <person name="Yamanishi H."/>
            <person name="Zabarovsky E."/>
            <person name="Zhu S."/>
            <person name="Zimmer A."/>
            <person name="Hide W."/>
            <person name="Bult C."/>
            <person name="Grimmond S.M."/>
            <person name="Teasdale R.D."/>
            <person name="Liu E.T."/>
            <person name="Brusic V."/>
            <person name="Quackenbush J."/>
            <person name="Wahlestedt C."/>
            <person name="Mattick J.S."/>
            <person name="Hume D.A."/>
            <person name="Kai C."/>
            <person name="Sasaki D."/>
            <person name="Tomaru Y."/>
            <person name="Fukuda S."/>
            <person name="Kanamori-Katayama M."/>
            <person name="Suzuki M."/>
            <person name="Aoki J."/>
            <person name="Arakawa T."/>
            <person name="Iida J."/>
            <person name="Imamura K."/>
            <person name="Itoh M."/>
            <person name="Kato T."/>
            <person name="Kawaji H."/>
            <person name="Kawagashira N."/>
            <person name="Kawashima T."/>
            <person name="Kojima M."/>
            <person name="Kondo S."/>
            <person name="Konno H."/>
            <person name="Nakano K."/>
            <person name="Ninomiya N."/>
            <person name="Nishio T."/>
            <person name="Okada M."/>
            <person name="Plessy C."/>
            <person name="Shibata K."/>
            <person name="Shiraki T."/>
            <person name="Suzuki S."/>
            <person name="Tagami M."/>
            <person name="Waki K."/>
            <person name="Watahiki A."/>
            <person name="Okamura-Oho Y."/>
            <person name="Suzuki H."/>
            <person name="Kawai J."/>
            <person name="Hayashizaki Y."/>
        </authorList>
    </citation>
    <scope>NUCLEOTIDE SEQUENCE [LARGE SCALE MRNA]</scope>
    <source>
        <strain>BALB/cJ</strain>
        <strain>C57BL/6J</strain>
        <tissue>Embryo</tissue>
    </source>
</reference>
<reference key="2">
    <citation type="submission" date="2005-09" db="EMBL/GenBank/DDBJ databases">
        <authorList>
            <person name="Mural R.J."/>
            <person name="Adams M.D."/>
            <person name="Myers E.W."/>
            <person name="Smith H.O."/>
            <person name="Venter J.C."/>
        </authorList>
    </citation>
    <scope>NUCLEOTIDE SEQUENCE [LARGE SCALE GENOMIC DNA]</scope>
</reference>
<reference key="3">
    <citation type="journal article" date="2004" name="Genome Res.">
        <title>The status, quality, and expansion of the NIH full-length cDNA project: the Mammalian Gene Collection (MGC).</title>
        <authorList>
            <consortium name="The MGC Project Team"/>
        </authorList>
    </citation>
    <scope>NUCLEOTIDE SEQUENCE [LARGE SCALE MRNA]</scope>
    <source>
        <strain>C57BL/6J</strain>
        <tissue>Brain</tissue>
        <tissue>Mammary gland</tissue>
        <tissue>Thyroid</tissue>
    </source>
</reference>
<reference key="4">
    <citation type="journal article" date="2010" name="Cell">
        <title>A tissue-specific atlas of mouse protein phosphorylation and expression.</title>
        <authorList>
            <person name="Huttlin E.L."/>
            <person name="Jedrychowski M.P."/>
            <person name="Elias J.E."/>
            <person name="Goswami T."/>
            <person name="Rad R."/>
            <person name="Beausoleil S.A."/>
            <person name="Villen J."/>
            <person name="Haas W."/>
            <person name="Sowa M.E."/>
            <person name="Gygi S.P."/>
        </authorList>
    </citation>
    <scope>IDENTIFICATION BY MASS SPECTROMETRY [LARGE SCALE ANALYSIS]</scope>
    <source>
        <tissue>Brain</tissue>
        <tissue>Liver</tissue>
        <tissue>Lung</tissue>
        <tissue>Pancreas</tissue>
        <tissue>Spleen</tissue>
        <tissue>Testis</tissue>
    </source>
</reference>
<reference key="5">
    <citation type="journal article" date="2013" name="Mol. Cell">
        <title>SIRT5-mediated lysine desuccinylation impacts diverse metabolic pathways.</title>
        <authorList>
            <person name="Park J."/>
            <person name="Chen Y."/>
            <person name="Tishkoff D.X."/>
            <person name="Peng C."/>
            <person name="Tan M."/>
            <person name="Dai L."/>
            <person name="Xie Z."/>
            <person name="Zhang Y."/>
            <person name="Zwaans B.M."/>
            <person name="Skinner M.E."/>
            <person name="Lombard D.B."/>
            <person name="Zhao Y."/>
        </authorList>
    </citation>
    <scope>ACETYLATION [LARGE SCALE ANALYSIS] AT LYS-43</scope>
    <scope>IDENTIFICATION BY MASS SPECTROMETRY [LARGE SCALE ANALYSIS]</scope>
    <source>
        <tissue>Embryonic fibroblast</tissue>
    </source>
</reference>
<reference evidence="5 6" key="6">
    <citation type="journal article" date="2022" name="Nature">
        <title>A male germ-cell-specific ribosome controls male fertility.</title>
        <authorList>
            <person name="Li H."/>
            <person name="Huo Y."/>
            <person name="He X."/>
            <person name="Yao L."/>
            <person name="Zhang H."/>
            <person name="Cui Y."/>
            <person name="Xiao H."/>
            <person name="Xie W."/>
            <person name="Zhang D."/>
            <person name="Wang Y."/>
            <person name="Zhang S."/>
            <person name="Tu H."/>
            <person name="Cheng Y."/>
            <person name="Guo Y."/>
            <person name="Cao X."/>
            <person name="Zhu Y."/>
            <person name="Jiang T."/>
            <person name="Guo X."/>
            <person name="Qin Y."/>
            <person name="Sha J."/>
        </authorList>
    </citation>
    <scope>STRUCTURE BY ELECTRON MICROSCOPY (3.03 ANGSTROMS) OF RIBOSOME</scope>
    <scope>FUNCTION</scope>
    <scope>SUBUNIT</scope>
    <scope>SUBCELLULAR LOCATION</scope>
</reference>
<comment type="function">
    <text evidence="3">Component of the large ribosomal subunit (PubMed:36517592). The ribosome is a large ribonucleoprotein complex responsible for the synthesis of proteins in the cell (PubMed:36517592).</text>
</comment>
<comment type="subunit">
    <text evidence="3">Component of the large ribosomal subunit.</text>
</comment>
<comment type="subcellular location">
    <subcellularLocation>
        <location evidence="1">Cytoplasm</location>
        <location evidence="1">Cytosol</location>
    </subcellularLocation>
    <subcellularLocation>
        <location evidence="3">Cytoplasm</location>
    </subcellularLocation>
    <subcellularLocation>
        <location evidence="2">Endoplasmic reticulum</location>
    </subcellularLocation>
    <text evidence="1 2">Detected on cytosolic polysomes (By similarity). Detected in ribosomes that are associated with the rough endoplasmic reticulum (By similarity).</text>
</comment>
<comment type="similarity">
    <text evidence="4">Belongs to the eukaryotic ribosomal protein eL34 family.</text>
</comment>
<sequence length="117" mass="13293">MVQRLTYRRRLSYNTASNKTRLSRTPGNRIVYLYTKKVGKAPKSACGVCPGRLRGVRAVRPKVLMRLSKTQKHVSRAYGGSMCAKCVRDRIKRAFLIEEQKIVVKVLKAQAQSQKAK</sequence>
<proteinExistence type="evidence at protein level"/>
<accession>Q9D1R9</accession>
<accession>Q497V4</accession>
<gene>
    <name type="primary">Rpl34</name>
</gene>
<name>RL34_MOUSE</name>